<name>RS16_PROA2</name>
<reference key="1">
    <citation type="submission" date="2008-06" db="EMBL/GenBank/DDBJ databases">
        <title>Complete sequence of chromosome of Prosthecochloris aestuarii DSM 271.</title>
        <authorList>
            <consortium name="US DOE Joint Genome Institute"/>
            <person name="Lucas S."/>
            <person name="Copeland A."/>
            <person name="Lapidus A."/>
            <person name="Glavina del Rio T."/>
            <person name="Dalin E."/>
            <person name="Tice H."/>
            <person name="Bruce D."/>
            <person name="Goodwin L."/>
            <person name="Pitluck S."/>
            <person name="Schmutz J."/>
            <person name="Larimer F."/>
            <person name="Land M."/>
            <person name="Hauser L."/>
            <person name="Kyrpides N."/>
            <person name="Anderson I."/>
            <person name="Liu Z."/>
            <person name="Li T."/>
            <person name="Zhao F."/>
            <person name="Overmann J."/>
            <person name="Bryant D.A."/>
            <person name="Richardson P."/>
        </authorList>
    </citation>
    <scope>NUCLEOTIDE SEQUENCE [LARGE SCALE GENOMIC DNA]</scope>
    <source>
        <strain>DSM 271 / SK 413</strain>
    </source>
</reference>
<sequence>MVKIRLRRAGRKKMPVYQIVAADARAPRDGKFLEVIGRYQPTAKPHSITIDKERVEYWLGVGAQPTTTAQSLLRATGLLYEMNLKRKGRSEEEIVSEMAQWQERQSARLQKRLAVKARRRQAKKDAQAAAAASAE</sequence>
<proteinExistence type="inferred from homology"/>
<organism>
    <name type="scientific">Prosthecochloris aestuarii (strain DSM 271 / SK 413)</name>
    <dbReference type="NCBI Taxonomy" id="290512"/>
    <lineage>
        <taxon>Bacteria</taxon>
        <taxon>Pseudomonadati</taxon>
        <taxon>Chlorobiota</taxon>
        <taxon>Chlorobiia</taxon>
        <taxon>Chlorobiales</taxon>
        <taxon>Chlorobiaceae</taxon>
        <taxon>Prosthecochloris</taxon>
    </lineage>
</organism>
<keyword id="KW-0687">Ribonucleoprotein</keyword>
<keyword id="KW-0689">Ribosomal protein</keyword>
<gene>
    <name evidence="1" type="primary">rpsP</name>
    <name type="ordered locus">Paes_1015</name>
</gene>
<protein>
    <recommendedName>
        <fullName evidence="1">Small ribosomal subunit protein bS16</fullName>
    </recommendedName>
    <alternativeName>
        <fullName evidence="2">30S ribosomal protein S16</fullName>
    </alternativeName>
</protein>
<comment type="similarity">
    <text evidence="1">Belongs to the bacterial ribosomal protein bS16 family.</text>
</comment>
<evidence type="ECO:0000255" key="1">
    <source>
        <dbReference type="HAMAP-Rule" id="MF_00385"/>
    </source>
</evidence>
<evidence type="ECO:0000305" key="2"/>
<accession>B4S7L7</accession>
<dbReference type="EMBL" id="CP001108">
    <property type="protein sequence ID" value="ACF46054.1"/>
    <property type="molecule type" value="Genomic_DNA"/>
</dbReference>
<dbReference type="RefSeq" id="WP_012505591.1">
    <property type="nucleotide sequence ID" value="NC_011059.1"/>
</dbReference>
<dbReference type="SMR" id="B4S7L7"/>
<dbReference type="STRING" id="290512.Paes_1015"/>
<dbReference type="KEGG" id="paa:Paes_1015"/>
<dbReference type="eggNOG" id="COG0228">
    <property type="taxonomic scope" value="Bacteria"/>
</dbReference>
<dbReference type="HOGENOM" id="CLU_100590_3_2_10"/>
<dbReference type="Proteomes" id="UP000002725">
    <property type="component" value="Chromosome"/>
</dbReference>
<dbReference type="GO" id="GO:0005737">
    <property type="term" value="C:cytoplasm"/>
    <property type="evidence" value="ECO:0007669"/>
    <property type="project" value="UniProtKB-ARBA"/>
</dbReference>
<dbReference type="GO" id="GO:0015935">
    <property type="term" value="C:small ribosomal subunit"/>
    <property type="evidence" value="ECO:0007669"/>
    <property type="project" value="TreeGrafter"/>
</dbReference>
<dbReference type="GO" id="GO:0003735">
    <property type="term" value="F:structural constituent of ribosome"/>
    <property type="evidence" value="ECO:0007669"/>
    <property type="project" value="InterPro"/>
</dbReference>
<dbReference type="GO" id="GO:0006412">
    <property type="term" value="P:translation"/>
    <property type="evidence" value="ECO:0007669"/>
    <property type="project" value="UniProtKB-UniRule"/>
</dbReference>
<dbReference type="Gene3D" id="3.30.1320.10">
    <property type="match status" value="1"/>
</dbReference>
<dbReference type="HAMAP" id="MF_00385">
    <property type="entry name" value="Ribosomal_bS16"/>
    <property type="match status" value="1"/>
</dbReference>
<dbReference type="InterPro" id="IPR000307">
    <property type="entry name" value="Ribosomal_bS16"/>
</dbReference>
<dbReference type="InterPro" id="IPR023803">
    <property type="entry name" value="Ribosomal_bS16_dom_sf"/>
</dbReference>
<dbReference type="NCBIfam" id="TIGR00002">
    <property type="entry name" value="S16"/>
    <property type="match status" value="1"/>
</dbReference>
<dbReference type="PANTHER" id="PTHR12919">
    <property type="entry name" value="30S RIBOSOMAL PROTEIN S16"/>
    <property type="match status" value="1"/>
</dbReference>
<dbReference type="PANTHER" id="PTHR12919:SF20">
    <property type="entry name" value="SMALL RIBOSOMAL SUBUNIT PROTEIN BS16M"/>
    <property type="match status" value="1"/>
</dbReference>
<dbReference type="Pfam" id="PF00886">
    <property type="entry name" value="Ribosomal_S16"/>
    <property type="match status" value="1"/>
</dbReference>
<dbReference type="SUPFAM" id="SSF54565">
    <property type="entry name" value="Ribosomal protein S16"/>
    <property type="match status" value="1"/>
</dbReference>
<feature type="chain" id="PRO_1000196456" description="Small ribosomal subunit protein bS16">
    <location>
        <begin position="1"/>
        <end position="135"/>
    </location>
</feature>